<reference key="1">
    <citation type="journal article" date="2004" name="Proc. Natl. Acad. Sci. U.S.A.">
        <title>Genomic analysis of Bacteroides fragilis reveals extensive DNA inversions regulating cell surface adaptation.</title>
        <authorList>
            <person name="Kuwahara T."/>
            <person name="Yamashita A."/>
            <person name="Hirakawa H."/>
            <person name="Nakayama H."/>
            <person name="Toh H."/>
            <person name="Okada N."/>
            <person name="Kuhara S."/>
            <person name="Hattori M."/>
            <person name="Hayashi T."/>
            <person name="Ohnishi Y."/>
        </authorList>
    </citation>
    <scope>NUCLEOTIDE SEQUENCE [LARGE SCALE GENOMIC DNA]</scope>
    <source>
        <strain>YCH46</strain>
    </source>
</reference>
<dbReference type="EMBL" id="AP006841">
    <property type="protein sequence ID" value="BAD50920.1"/>
    <property type="molecule type" value="Genomic_DNA"/>
</dbReference>
<dbReference type="RefSeq" id="WP_005782197.1">
    <property type="nucleotide sequence ID" value="NZ_UYXF01000007.1"/>
</dbReference>
<dbReference type="RefSeq" id="YP_101454.1">
    <property type="nucleotide sequence ID" value="NC_006347.1"/>
</dbReference>
<dbReference type="SMR" id="Q64NL2"/>
<dbReference type="STRING" id="295405.BF4177"/>
<dbReference type="GeneID" id="93105320"/>
<dbReference type="KEGG" id="bfr:BF4177"/>
<dbReference type="PATRIC" id="fig|295405.11.peg.4031"/>
<dbReference type="HOGENOM" id="CLU_144911_0_1_10"/>
<dbReference type="OrthoDB" id="9797833at2"/>
<dbReference type="Proteomes" id="UP000002197">
    <property type="component" value="Chromosome"/>
</dbReference>
<dbReference type="GO" id="GO:0005737">
    <property type="term" value="C:cytoplasm"/>
    <property type="evidence" value="ECO:0007669"/>
    <property type="project" value="UniProtKB-ARBA"/>
</dbReference>
<dbReference type="GO" id="GO:0015935">
    <property type="term" value="C:small ribosomal subunit"/>
    <property type="evidence" value="ECO:0007669"/>
    <property type="project" value="InterPro"/>
</dbReference>
<dbReference type="GO" id="GO:0019843">
    <property type="term" value="F:rRNA binding"/>
    <property type="evidence" value="ECO:0007669"/>
    <property type="project" value="UniProtKB-UniRule"/>
</dbReference>
<dbReference type="GO" id="GO:0003735">
    <property type="term" value="F:structural constituent of ribosome"/>
    <property type="evidence" value="ECO:0007669"/>
    <property type="project" value="InterPro"/>
</dbReference>
<dbReference type="GO" id="GO:0000028">
    <property type="term" value="P:ribosomal small subunit assembly"/>
    <property type="evidence" value="ECO:0007669"/>
    <property type="project" value="TreeGrafter"/>
</dbReference>
<dbReference type="GO" id="GO:0006412">
    <property type="term" value="P:translation"/>
    <property type="evidence" value="ECO:0007669"/>
    <property type="project" value="UniProtKB-UniRule"/>
</dbReference>
<dbReference type="FunFam" id="3.30.860.10:FF:000001">
    <property type="entry name" value="30S ribosomal protein S19"/>
    <property type="match status" value="1"/>
</dbReference>
<dbReference type="Gene3D" id="3.30.860.10">
    <property type="entry name" value="30s Ribosomal Protein S19, Chain A"/>
    <property type="match status" value="1"/>
</dbReference>
<dbReference type="HAMAP" id="MF_00531">
    <property type="entry name" value="Ribosomal_uS19"/>
    <property type="match status" value="1"/>
</dbReference>
<dbReference type="InterPro" id="IPR002222">
    <property type="entry name" value="Ribosomal_uS19"/>
</dbReference>
<dbReference type="InterPro" id="IPR005732">
    <property type="entry name" value="Ribosomal_uS19_bac-type"/>
</dbReference>
<dbReference type="InterPro" id="IPR020934">
    <property type="entry name" value="Ribosomal_uS19_CS"/>
</dbReference>
<dbReference type="InterPro" id="IPR023575">
    <property type="entry name" value="Ribosomal_uS19_SF"/>
</dbReference>
<dbReference type="NCBIfam" id="TIGR01050">
    <property type="entry name" value="rpsS_bact"/>
    <property type="match status" value="1"/>
</dbReference>
<dbReference type="PANTHER" id="PTHR11880">
    <property type="entry name" value="RIBOSOMAL PROTEIN S19P FAMILY MEMBER"/>
    <property type="match status" value="1"/>
</dbReference>
<dbReference type="PANTHER" id="PTHR11880:SF8">
    <property type="entry name" value="SMALL RIBOSOMAL SUBUNIT PROTEIN US19M"/>
    <property type="match status" value="1"/>
</dbReference>
<dbReference type="Pfam" id="PF00203">
    <property type="entry name" value="Ribosomal_S19"/>
    <property type="match status" value="1"/>
</dbReference>
<dbReference type="PIRSF" id="PIRSF002144">
    <property type="entry name" value="Ribosomal_S19"/>
    <property type="match status" value="1"/>
</dbReference>
<dbReference type="PRINTS" id="PR00975">
    <property type="entry name" value="RIBOSOMALS19"/>
</dbReference>
<dbReference type="SUPFAM" id="SSF54570">
    <property type="entry name" value="Ribosomal protein S19"/>
    <property type="match status" value="1"/>
</dbReference>
<dbReference type="PROSITE" id="PS00323">
    <property type="entry name" value="RIBOSOMAL_S19"/>
    <property type="match status" value="1"/>
</dbReference>
<gene>
    <name evidence="1" type="primary">rpsS</name>
    <name type="ordered locus">BF4177</name>
</gene>
<evidence type="ECO:0000255" key="1">
    <source>
        <dbReference type="HAMAP-Rule" id="MF_00531"/>
    </source>
</evidence>
<evidence type="ECO:0000305" key="2"/>
<name>RS19_BACFR</name>
<protein>
    <recommendedName>
        <fullName evidence="1">Small ribosomal subunit protein uS19</fullName>
    </recommendedName>
    <alternativeName>
        <fullName evidence="2">30S ribosomal protein S19</fullName>
    </alternativeName>
</protein>
<accession>Q64NL2</accession>
<organism>
    <name type="scientific">Bacteroides fragilis (strain YCH46)</name>
    <dbReference type="NCBI Taxonomy" id="295405"/>
    <lineage>
        <taxon>Bacteria</taxon>
        <taxon>Pseudomonadati</taxon>
        <taxon>Bacteroidota</taxon>
        <taxon>Bacteroidia</taxon>
        <taxon>Bacteroidales</taxon>
        <taxon>Bacteroidaceae</taxon>
        <taxon>Bacteroides</taxon>
    </lineage>
</organism>
<sequence length="89" mass="9911">MSRSLKKGPYINVKLEKKVLAMNESGKKVVVKTWSRASMISPDFVGHTVAVHNGNKFIPVYVTENMVGHKLGEFAPTRTFRGHAGNKKK</sequence>
<keyword id="KW-0687">Ribonucleoprotein</keyword>
<keyword id="KW-0689">Ribosomal protein</keyword>
<keyword id="KW-0694">RNA-binding</keyword>
<keyword id="KW-0699">rRNA-binding</keyword>
<proteinExistence type="inferred from homology"/>
<comment type="function">
    <text evidence="1">Protein S19 forms a complex with S13 that binds strongly to the 16S ribosomal RNA.</text>
</comment>
<comment type="similarity">
    <text evidence="1">Belongs to the universal ribosomal protein uS19 family.</text>
</comment>
<feature type="chain" id="PRO_0000129775" description="Small ribosomal subunit protein uS19">
    <location>
        <begin position="1"/>
        <end position="89"/>
    </location>
</feature>